<proteinExistence type="inferred from homology"/>
<sequence length="367" mass="40901">MAVANLTSEQAVLNEVARQDRNRRAIRIWLGCVLLALFALVLVGGATRLTESGLSITQWQPIHGVIPPLNAQEWQEEFDLYKRIPQFQLLNKDMTVDEFKGIFWWEWAHRFLARAMGVIFGVPLLFFVLTGRVERKLWLPLGGIFLLGGLQGAIGWWMVSSGLQARTDVSQYRLATHLVTACLIFASCMWFMRALSPHSNEPAPTRYSAKLAGLIAFMSLFQIYLGALVAGLDAGMSYNTWPLMDGAVVPGGLFVQSPGWINFFENPKMVQYVHRLGAYALFAVVAVNMIISLRAAAETTHARRSVVLFVLVLIQAILGITTLLLQVPLHLALTHQAGALIVFGFAIANWRGFYGEYPRQTVIAVRD</sequence>
<keyword id="KW-1003">Cell membrane</keyword>
<keyword id="KW-0350">Heme biosynthesis</keyword>
<keyword id="KW-0408">Iron</keyword>
<keyword id="KW-0472">Membrane</keyword>
<keyword id="KW-0479">Metal-binding</keyword>
<keyword id="KW-0560">Oxidoreductase</keyword>
<keyword id="KW-0812">Transmembrane</keyword>
<keyword id="KW-1133">Transmembrane helix</keyword>
<protein>
    <recommendedName>
        <fullName evidence="1">Heme A synthase</fullName>
        <shortName evidence="1">HAS</shortName>
        <ecNumber evidence="1">1.17.99.9</ecNumber>
    </recommendedName>
    <alternativeName>
        <fullName evidence="1">Cytochrome aa3-controlling protein</fullName>
    </alternativeName>
</protein>
<name>CTAA_RHIR8</name>
<feature type="chain" id="PRO_1000187245" description="Heme A synthase">
    <location>
        <begin position="1"/>
        <end position="367"/>
    </location>
</feature>
<feature type="transmembrane region" description="Helical" evidence="1">
    <location>
        <begin position="25"/>
        <end position="45"/>
    </location>
</feature>
<feature type="transmembrane region" description="Helical" evidence="1">
    <location>
        <begin position="111"/>
        <end position="131"/>
    </location>
</feature>
<feature type="transmembrane region" description="Helical" evidence="1">
    <location>
        <begin position="137"/>
        <end position="157"/>
    </location>
</feature>
<feature type="transmembrane region" description="Helical" evidence="1">
    <location>
        <begin position="174"/>
        <end position="194"/>
    </location>
</feature>
<feature type="transmembrane region" description="Helical" evidence="1">
    <location>
        <begin position="211"/>
        <end position="231"/>
    </location>
</feature>
<feature type="transmembrane region" description="Helical" evidence="1">
    <location>
        <begin position="276"/>
        <end position="296"/>
    </location>
</feature>
<feature type="transmembrane region" description="Helical" evidence="1">
    <location>
        <begin position="305"/>
        <end position="325"/>
    </location>
</feature>
<feature type="transmembrane region" description="Helical" evidence="1">
    <location>
        <begin position="327"/>
        <end position="347"/>
    </location>
</feature>
<feature type="binding site" description="axial binding residue" evidence="1">
    <location>
        <position position="274"/>
    </location>
    <ligand>
        <name>heme</name>
        <dbReference type="ChEBI" id="CHEBI:30413"/>
    </ligand>
    <ligandPart>
        <name>Fe</name>
        <dbReference type="ChEBI" id="CHEBI:18248"/>
    </ligandPart>
</feature>
<feature type="binding site" description="axial binding residue" evidence="1">
    <location>
        <position position="335"/>
    </location>
    <ligand>
        <name>heme</name>
        <dbReference type="ChEBI" id="CHEBI:30413"/>
    </ligand>
    <ligandPart>
        <name>Fe</name>
        <dbReference type="ChEBI" id="CHEBI:18248"/>
    </ligandPart>
</feature>
<accession>B9JD11</accession>
<gene>
    <name evidence="1" type="primary">ctaA</name>
    <name type="ordered locus">Arad_1800</name>
</gene>
<comment type="function">
    <text evidence="1">Catalyzes the conversion of heme O to heme A by two successive hydroxylations of the methyl group at C8. The first hydroxylation forms heme I, the second hydroxylation results in an unstable dihydroxymethyl group, which spontaneously dehydrates, resulting in the formyl group of heme A.</text>
</comment>
<comment type="catalytic activity">
    <reaction evidence="1">
        <text>Fe(II)-heme o + 2 A + H2O = Fe(II)-heme a + 2 AH2</text>
        <dbReference type="Rhea" id="RHEA:63388"/>
        <dbReference type="ChEBI" id="CHEBI:13193"/>
        <dbReference type="ChEBI" id="CHEBI:15377"/>
        <dbReference type="ChEBI" id="CHEBI:17499"/>
        <dbReference type="ChEBI" id="CHEBI:60530"/>
        <dbReference type="ChEBI" id="CHEBI:61715"/>
        <dbReference type="EC" id="1.17.99.9"/>
    </reaction>
    <physiologicalReaction direction="left-to-right" evidence="1">
        <dbReference type="Rhea" id="RHEA:63389"/>
    </physiologicalReaction>
</comment>
<comment type="cofactor">
    <cofactor evidence="1">
        <name>heme b</name>
        <dbReference type="ChEBI" id="CHEBI:60344"/>
    </cofactor>
</comment>
<comment type="pathway">
    <text evidence="1">Porphyrin-containing compound metabolism; heme A biosynthesis; heme A from heme O: step 1/1.</text>
</comment>
<comment type="subunit">
    <text evidence="1">Interacts with CtaB.</text>
</comment>
<comment type="subcellular location">
    <subcellularLocation>
        <location evidence="1">Cell membrane</location>
        <topology evidence="1">Multi-pass membrane protein</topology>
    </subcellularLocation>
</comment>
<comment type="similarity">
    <text evidence="1">Belongs to the COX15/CtaA family. Type 2 subfamily.</text>
</comment>
<dbReference type="EC" id="1.17.99.9" evidence="1"/>
<dbReference type="EMBL" id="CP000628">
    <property type="protein sequence ID" value="ACM26148.1"/>
    <property type="molecule type" value="Genomic_DNA"/>
</dbReference>
<dbReference type="RefSeq" id="WP_007692736.1">
    <property type="nucleotide sequence ID" value="NC_011985.1"/>
</dbReference>
<dbReference type="SMR" id="B9JD11"/>
<dbReference type="STRING" id="311403.Arad_1800"/>
<dbReference type="KEGG" id="ara:Arad_1800"/>
<dbReference type="eggNOG" id="COG1612">
    <property type="taxonomic scope" value="Bacteria"/>
</dbReference>
<dbReference type="HOGENOM" id="CLU_017627_0_0_5"/>
<dbReference type="UniPathway" id="UPA00269">
    <property type="reaction ID" value="UER00713"/>
</dbReference>
<dbReference type="Proteomes" id="UP000001600">
    <property type="component" value="Chromosome 1"/>
</dbReference>
<dbReference type="GO" id="GO:0005886">
    <property type="term" value="C:plasma membrane"/>
    <property type="evidence" value="ECO:0007669"/>
    <property type="project" value="UniProtKB-SubCell"/>
</dbReference>
<dbReference type="GO" id="GO:0046872">
    <property type="term" value="F:metal ion binding"/>
    <property type="evidence" value="ECO:0007669"/>
    <property type="project" value="UniProtKB-KW"/>
</dbReference>
<dbReference type="GO" id="GO:0016653">
    <property type="term" value="F:oxidoreductase activity, acting on NAD(P)H, heme protein as acceptor"/>
    <property type="evidence" value="ECO:0007669"/>
    <property type="project" value="InterPro"/>
</dbReference>
<dbReference type="GO" id="GO:0006784">
    <property type="term" value="P:heme A biosynthetic process"/>
    <property type="evidence" value="ECO:0007669"/>
    <property type="project" value="UniProtKB-UniRule"/>
</dbReference>
<dbReference type="HAMAP" id="MF_01665">
    <property type="entry name" value="HemeA_synth_type2"/>
    <property type="match status" value="1"/>
</dbReference>
<dbReference type="InterPro" id="IPR003780">
    <property type="entry name" value="COX15/CtaA_fam"/>
</dbReference>
<dbReference type="InterPro" id="IPR023754">
    <property type="entry name" value="HemeA_Synthase_type2"/>
</dbReference>
<dbReference type="PANTHER" id="PTHR23289">
    <property type="entry name" value="CYTOCHROME C OXIDASE ASSEMBLY PROTEIN COX15"/>
    <property type="match status" value="1"/>
</dbReference>
<dbReference type="PANTHER" id="PTHR23289:SF2">
    <property type="entry name" value="CYTOCHROME C OXIDASE ASSEMBLY PROTEIN COX15 HOMOLOG"/>
    <property type="match status" value="1"/>
</dbReference>
<dbReference type="Pfam" id="PF02628">
    <property type="entry name" value="COX15-CtaA"/>
    <property type="match status" value="1"/>
</dbReference>
<evidence type="ECO:0000255" key="1">
    <source>
        <dbReference type="HAMAP-Rule" id="MF_01665"/>
    </source>
</evidence>
<reference key="1">
    <citation type="journal article" date="2009" name="J. Bacteriol.">
        <title>Genome sequences of three Agrobacterium biovars help elucidate the evolution of multichromosome genomes in bacteria.</title>
        <authorList>
            <person name="Slater S.C."/>
            <person name="Goldman B.S."/>
            <person name="Goodner B."/>
            <person name="Setubal J.C."/>
            <person name="Farrand S.K."/>
            <person name="Nester E.W."/>
            <person name="Burr T.J."/>
            <person name="Banta L."/>
            <person name="Dickerman A.W."/>
            <person name="Paulsen I."/>
            <person name="Otten L."/>
            <person name="Suen G."/>
            <person name="Welch R."/>
            <person name="Almeida N.F."/>
            <person name="Arnold F."/>
            <person name="Burton O.T."/>
            <person name="Du Z."/>
            <person name="Ewing A."/>
            <person name="Godsy E."/>
            <person name="Heisel S."/>
            <person name="Houmiel K.L."/>
            <person name="Jhaveri J."/>
            <person name="Lu J."/>
            <person name="Miller N.M."/>
            <person name="Norton S."/>
            <person name="Chen Q."/>
            <person name="Phoolcharoen W."/>
            <person name="Ohlin V."/>
            <person name="Ondrusek D."/>
            <person name="Pride N."/>
            <person name="Stricklin S.L."/>
            <person name="Sun J."/>
            <person name="Wheeler C."/>
            <person name="Wilson L."/>
            <person name="Zhu H."/>
            <person name="Wood D.W."/>
        </authorList>
    </citation>
    <scope>NUCLEOTIDE SEQUENCE [LARGE SCALE GENOMIC DNA]</scope>
    <source>
        <strain>K84 / ATCC BAA-868</strain>
    </source>
</reference>
<organism>
    <name type="scientific">Rhizobium rhizogenes (strain K84 / ATCC BAA-868)</name>
    <name type="common">Agrobacterium radiobacter</name>
    <dbReference type="NCBI Taxonomy" id="311403"/>
    <lineage>
        <taxon>Bacteria</taxon>
        <taxon>Pseudomonadati</taxon>
        <taxon>Pseudomonadota</taxon>
        <taxon>Alphaproteobacteria</taxon>
        <taxon>Hyphomicrobiales</taxon>
        <taxon>Rhizobiaceae</taxon>
        <taxon>Rhizobium/Agrobacterium group</taxon>
        <taxon>Rhizobium</taxon>
    </lineage>
</organism>